<proteinExistence type="inferred from homology"/>
<protein>
    <recommendedName>
        <fullName>Retinoic acid receptor RXR-beta</fullName>
    </recommendedName>
    <alternativeName>
        <fullName>Nuclear receptor subfamily 2 group B member 2</fullName>
    </alternativeName>
    <alternativeName>
        <fullName>Retinoid X receptor beta</fullName>
    </alternativeName>
</protein>
<feature type="chain" id="PRO_0000053571" description="Retinoic acid receptor RXR-beta">
    <location>
        <begin position="1"/>
        <end position="533"/>
    </location>
</feature>
<feature type="domain" description="NR LBD" evidence="5">
    <location>
        <begin position="296"/>
        <end position="529"/>
    </location>
</feature>
<feature type="DNA-binding region" description="Nuclear receptor" evidence="4">
    <location>
        <begin position="205"/>
        <end position="270"/>
    </location>
</feature>
<feature type="zinc finger region" description="NR C4-type" evidence="4">
    <location>
        <begin position="205"/>
        <end position="225"/>
    </location>
</feature>
<feature type="zinc finger region" description="NR C4-type" evidence="4">
    <location>
        <begin position="241"/>
        <end position="265"/>
    </location>
</feature>
<feature type="region of interest" description="Modulating" evidence="1">
    <location>
        <begin position="1"/>
        <end position="204"/>
    </location>
</feature>
<feature type="region of interest" description="Disordered" evidence="6">
    <location>
        <begin position="1"/>
        <end position="24"/>
    </location>
</feature>
<feature type="region of interest" description="Disordered" evidence="6">
    <location>
        <begin position="37"/>
        <end position="183"/>
    </location>
</feature>
<feature type="region of interest" description="Hinge">
    <location>
        <begin position="271"/>
        <end position="295"/>
    </location>
</feature>
<feature type="region of interest" description="Disordered" evidence="6">
    <location>
        <begin position="276"/>
        <end position="299"/>
    </location>
</feature>
<feature type="region of interest" description="Disordered" evidence="6">
    <location>
        <begin position="313"/>
        <end position="336"/>
    </location>
</feature>
<feature type="compositionally biased region" description="Low complexity" evidence="6">
    <location>
        <begin position="46"/>
        <end position="61"/>
    </location>
</feature>
<feature type="compositionally biased region" description="Basic and acidic residues" evidence="6">
    <location>
        <begin position="67"/>
        <end position="82"/>
    </location>
</feature>
<feature type="compositionally biased region" description="Low complexity" evidence="6">
    <location>
        <begin position="83"/>
        <end position="94"/>
    </location>
</feature>
<feature type="compositionally biased region" description="Pro residues" evidence="6">
    <location>
        <begin position="95"/>
        <end position="109"/>
    </location>
</feature>
<feature type="compositionally biased region" description="Pro residues" evidence="6">
    <location>
        <begin position="118"/>
        <end position="129"/>
    </location>
</feature>
<feature type="compositionally biased region" description="Low complexity" evidence="6">
    <location>
        <begin position="130"/>
        <end position="143"/>
    </location>
</feature>
<feature type="compositionally biased region" description="Pro residues" evidence="6">
    <location>
        <begin position="144"/>
        <end position="153"/>
    </location>
</feature>
<feature type="compositionally biased region" description="Basic and acidic residues" evidence="6">
    <location>
        <begin position="276"/>
        <end position="288"/>
    </location>
</feature>
<feature type="compositionally biased region" description="Gly residues" evidence="6">
    <location>
        <begin position="320"/>
        <end position="329"/>
    </location>
</feature>
<feature type="modified residue" description="Omega-N-methylarginine" evidence="2">
    <location>
        <position position="25"/>
    </location>
</feature>
<sequence>MSWAARPPFLPQRHAAGQCGPVGVRKEMHCGVASRWRRRRPWLDPAAAAAAAAAAGEQQTPEPEPGEAGRDGMGDSGRDSRSPDSSSPNPLSQGAPPPSPPGLPLPPSSAPTLGGSGAPPPPPMPPPQLGSPFPVISSSMGSPGLPPPAPPGFSGPVSSPQINSTVSLPGGGSGPPEDVKPPVLGVRGLHCPPPPGGPGAGKRLCAICGDRSSGKHYGVYSCEGCKGFFKRTIRKDLTYSCRDNKDCTVDKRQRNRCQYCRYQKCLATGMKREAVQEERQRGKDKDGDGEGAGGAPEEMPVDRILEAELAVEQKSDQGVEGPGGTGGSGSSPNDPVTNICQAADKQLFTLVEWAKRIPHFSSLPLDDQVILLRAGWNELLIASFSHRSIDVRDGILLATGLHVHRNSAHSAGVGAIFDRVLTELVSKMRDMRMDKTELGCLRAIILFNPDAKGLSNPSEVEVLREKVYASLETYCKQKYPEQQGRFAKLLLRLPALRSIGLKCLEHLFFFKLIGDTPIDTFLMEMLEAPHQLA</sequence>
<comment type="function">
    <text evidence="3">Receptor for retinoic acid. Retinoic acid receptors bind as heterodimers to their target response elements in response to their ligands, all-trans or 9-cis retinoic acid, and regulate gene expression in various biological processes. The RAR/RXR heterodimers bind to the retinoic acid response elements (RARE).</text>
</comment>
<comment type="subunit">
    <text evidence="2 3">Homodimer (in vitro). Heterodimer with other retinoic acid receptor family members. Binds DNA preferentially as a RAR/RXR heterodimer. Interacts with NR1H3 (By similarity). Interacts with AKAP13 (By similarity).</text>
</comment>
<comment type="subcellular location">
    <subcellularLocation>
        <location evidence="4">Nucleus</location>
    </subcellularLocation>
    <subcellularLocation>
        <location evidence="2">Cytoplasm</location>
    </subcellularLocation>
</comment>
<comment type="domain">
    <text evidence="3">Composed of three domains: a modulating N-terminal domain, a DNA-binding domain and a C-terminal ligand-binding domain.</text>
</comment>
<comment type="similarity">
    <text evidence="7">Belongs to the nuclear hormone receptor family. NR2 subfamily.</text>
</comment>
<evidence type="ECO:0000250" key="1"/>
<evidence type="ECO:0000250" key="2">
    <source>
        <dbReference type="UniProtKB" id="P28702"/>
    </source>
</evidence>
<evidence type="ECO:0000250" key="3">
    <source>
        <dbReference type="UniProtKB" id="P28704"/>
    </source>
</evidence>
<evidence type="ECO:0000255" key="4">
    <source>
        <dbReference type="PROSITE-ProRule" id="PRU00407"/>
    </source>
</evidence>
<evidence type="ECO:0000255" key="5">
    <source>
        <dbReference type="PROSITE-ProRule" id="PRU01189"/>
    </source>
</evidence>
<evidence type="ECO:0000256" key="6">
    <source>
        <dbReference type="SAM" id="MobiDB-lite"/>
    </source>
</evidence>
<evidence type="ECO:0000305" key="7"/>
<reference key="1">
    <citation type="journal article" date="2005" name="Genomics">
        <title>Genomic sequence of the class II region of the canine MHC: comparison with the MHC of other mammalian species.</title>
        <authorList>
            <person name="Debenham S.L."/>
            <person name="Hart E.A."/>
            <person name="Ashurst J.L."/>
            <person name="Howe K.L."/>
            <person name="Quail M.A."/>
            <person name="Ollier W.E.R."/>
            <person name="Binns M.M."/>
        </authorList>
    </citation>
    <scope>NUCLEOTIDE SEQUENCE [LARGE SCALE GENOMIC DNA]</scope>
    <source>
        <strain>Doberman pinscher</strain>
    </source>
</reference>
<dbReference type="EMBL" id="AJ630366">
    <property type="protein sequence ID" value="CAI11431.1"/>
    <property type="molecule type" value="Genomic_DNA"/>
</dbReference>
<dbReference type="RefSeq" id="XP_038539105.1">
    <property type="nucleotide sequence ID" value="XM_038683177.1"/>
</dbReference>
<dbReference type="SMR" id="Q5TJF7"/>
<dbReference type="FunCoup" id="Q5TJF7">
    <property type="interactions" value="989"/>
</dbReference>
<dbReference type="STRING" id="9615.ENSCAFP00000001304"/>
<dbReference type="PaxDb" id="9612-ENSCAFP00000001304"/>
<dbReference type="GeneID" id="481735"/>
<dbReference type="eggNOG" id="KOG3575">
    <property type="taxonomic scope" value="Eukaryota"/>
</dbReference>
<dbReference type="InParanoid" id="Q5TJF7"/>
<dbReference type="OrthoDB" id="5873264at2759"/>
<dbReference type="Proteomes" id="UP000002254">
    <property type="component" value="Unplaced"/>
</dbReference>
<dbReference type="Proteomes" id="UP000694429">
    <property type="component" value="Unplaced"/>
</dbReference>
<dbReference type="Proteomes" id="UP000694542">
    <property type="component" value="Unplaced"/>
</dbReference>
<dbReference type="Proteomes" id="UP000805418">
    <property type="component" value="Unplaced"/>
</dbReference>
<dbReference type="GO" id="GO:0005737">
    <property type="term" value="C:cytoplasm"/>
    <property type="evidence" value="ECO:0007669"/>
    <property type="project" value="UniProtKB-SubCell"/>
</dbReference>
<dbReference type="GO" id="GO:0090575">
    <property type="term" value="C:RNA polymerase II transcription regulator complex"/>
    <property type="evidence" value="ECO:0000318"/>
    <property type="project" value="GO_Central"/>
</dbReference>
<dbReference type="GO" id="GO:0004879">
    <property type="term" value="F:nuclear receptor activity"/>
    <property type="evidence" value="ECO:0000318"/>
    <property type="project" value="GO_Central"/>
</dbReference>
<dbReference type="GO" id="GO:0003707">
    <property type="term" value="F:nuclear steroid receptor activity"/>
    <property type="evidence" value="ECO:0007669"/>
    <property type="project" value="InterPro"/>
</dbReference>
<dbReference type="GO" id="GO:0044323">
    <property type="term" value="F:retinoic acid-responsive element binding"/>
    <property type="evidence" value="ECO:0000318"/>
    <property type="project" value="GO_Central"/>
</dbReference>
<dbReference type="GO" id="GO:0008270">
    <property type="term" value="F:zinc ion binding"/>
    <property type="evidence" value="ECO:0007669"/>
    <property type="project" value="UniProtKB-KW"/>
</dbReference>
<dbReference type="GO" id="GO:0030154">
    <property type="term" value="P:cell differentiation"/>
    <property type="evidence" value="ECO:0000318"/>
    <property type="project" value="GO_Central"/>
</dbReference>
<dbReference type="GO" id="GO:0007399">
    <property type="term" value="P:nervous system development"/>
    <property type="evidence" value="ECO:0000318"/>
    <property type="project" value="GO_Central"/>
</dbReference>
<dbReference type="GO" id="GO:0045944">
    <property type="term" value="P:positive regulation of transcription by RNA polymerase II"/>
    <property type="evidence" value="ECO:0000318"/>
    <property type="project" value="GO_Central"/>
</dbReference>
<dbReference type="GO" id="GO:0048384">
    <property type="term" value="P:retinoic acid receptor signaling pathway"/>
    <property type="evidence" value="ECO:0000318"/>
    <property type="project" value="GO_Central"/>
</dbReference>
<dbReference type="CDD" id="cd06956">
    <property type="entry name" value="NR_DBD_RXR"/>
    <property type="match status" value="1"/>
</dbReference>
<dbReference type="CDD" id="cd06943">
    <property type="entry name" value="NR_LBD_RXR_like"/>
    <property type="match status" value="1"/>
</dbReference>
<dbReference type="FunFam" id="1.10.565.10:FF:000002">
    <property type="entry name" value="Retinoic acid receptor RXR-alpha"/>
    <property type="match status" value="1"/>
</dbReference>
<dbReference type="FunFam" id="3.30.50.10:FF:000005">
    <property type="entry name" value="Retinoic acid receptor RXR-alpha"/>
    <property type="match status" value="1"/>
</dbReference>
<dbReference type="Gene3D" id="3.30.50.10">
    <property type="entry name" value="Erythroid Transcription Factor GATA-1, subunit A"/>
    <property type="match status" value="1"/>
</dbReference>
<dbReference type="Gene3D" id="1.10.565.10">
    <property type="entry name" value="Retinoid X Receptor"/>
    <property type="match status" value="1"/>
</dbReference>
<dbReference type="InterPro" id="IPR035500">
    <property type="entry name" value="NHR-like_dom_sf"/>
</dbReference>
<dbReference type="InterPro" id="IPR000536">
    <property type="entry name" value="Nucl_hrmn_rcpt_lig-bd"/>
</dbReference>
<dbReference type="InterPro" id="IPR050274">
    <property type="entry name" value="Nuclear_hormone_rcpt_NR2"/>
</dbReference>
<dbReference type="InterPro" id="IPR001723">
    <property type="entry name" value="Nuclear_hrmn_rcpt"/>
</dbReference>
<dbReference type="InterPro" id="IPR000003">
    <property type="entry name" value="Retinoid-X_rcpt/HNF4"/>
</dbReference>
<dbReference type="InterPro" id="IPR001628">
    <property type="entry name" value="Znf_hrmn_rcpt"/>
</dbReference>
<dbReference type="InterPro" id="IPR013088">
    <property type="entry name" value="Znf_NHR/GATA"/>
</dbReference>
<dbReference type="PANTHER" id="PTHR24083">
    <property type="entry name" value="NUCLEAR HORMONE RECEPTOR"/>
    <property type="match status" value="1"/>
</dbReference>
<dbReference type="Pfam" id="PF00104">
    <property type="entry name" value="Hormone_recep"/>
    <property type="match status" value="1"/>
</dbReference>
<dbReference type="Pfam" id="PF00105">
    <property type="entry name" value="zf-C4"/>
    <property type="match status" value="1"/>
</dbReference>
<dbReference type="PRINTS" id="PR00545">
    <property type="entry name" value="RETINOIDXR"/>
</dbReference>
<dbReference type="PRINTS" id="PR00398">
    <property type="entry name" value="STRDHORMONER"/>
</dbReference>
<dbReference type="PRINTS" id="PR00047">
    <property type="entry name" value="STROIDFINGER"/>
</dbReference>
<dbReference type="SMART" id="SM00430">
    <property type="entry name" value="HOLI"/>
    <property type="match status" value="1"/>
</dbReference>
<dbReference type="SMART" id="SM00399">
    <property type="entry name" value="ZnF_C4"/>
    <property type="match status" value="1"/>
</dbReference>
<dbReference type="SUPFAM" id="SSF57716">
    <property type="entry name" value="Glucocorticoid receptor-like (DNA-binding domain)"/>
    <property type="match status" value="1"/>
</dbReference>
<dbReference type="SUPFAM" id="SSF48508">
    <property type="entry name" value="Nuclear receptor ligand-binding domain"/>
    <property type="match status" value="1"/>
</dbReference>
<dbReference type="PROSITE" id="PS51843">
    <property type="entry name" value="NR_LBD"/>
    <property type="match status" value="1"/>
</dbReference>
<dbReference type="PROSITE" id="PS00031">
    <property type="entry name" value="NUCLEAR_REC_DBD_1"/>
    <property type="match status" value="1"/>
</dbReference>
<dbReference type="PROSITE" id="PS51030">
    <property type="entry name" value="NUCLEAR_REC_DBD_2"/>
    <property type="match status" value="1"/>
</dbReference>
<keyword id="KW-0963">Cytoplasm</keyword>
<keyword id="KW-0238">DNA-binding</keyword>
<keyword id="KW-0479">Metal-binding</keyword>
<keyword id="KW-0488">Methylation</keyword>
<keyword id="KW-0539">Nucleus</keyword>
<keyword id="KW-0675">Receptor</keyword>
<keyword id="KW-1185">Reference proteome</keyword>
<keyword id="KW-0804">Transcription</keyword>
<keyword id="KW-0805">Transcription regulation</keyword>
<keyword id="KW-0862">Zinc</keyword>
<keyword id="KW-0863">Zinc-finger</keyword>
<organism>
    <name type="scientific">Canis lupus familiaris</name>
    <name type="common">Dog</name>
    <name type="synonym">Canis familiaris</name>
    <dbReference type="NCBI Taxonomy" id="9615"/>
    <lineage>
        <taxon>Eukaryota</taxon>
        <taxon>Metazoa</taxon>
        <taxon>Chordata</taxon>
        <taxon>Craniata</taxon>
        <taxon>Vertebrata</taxon>
        <taxon>Euteleostomi</taxon>
        <taxon>Mammalia</taxon>
        <taxon>Eutheria</taxon>
        <taxon>Laurasiatheria</taxon>
        <taxon>Carnivora</taxon>
        <taxon>Caniformia</taxon>
        <taxon>Canidae</taxon>
        <taxon>Canis</taxon>
    </lineage>
</organism>
<gene>
    <name type="primary">RXRB</name>
    <name type="synonym">NR2B2</name>
</gene>
<name>RXRB_CANLF</name>
<accession>Q5TJF7</accession>